<keyword id="KW-1185">Reference proteome</keyword>
<proteinExistence type="predicted"/>
<name>FB47_ARATH</name>
<gene>
    <name type="ordered locus">At1g47915</name>
    <name type="ORF">T6B12</name>
</gene>
<accession>Q3E6X9</accession>
<dbReference type="EMBL" id="AC079679">
    <property type="status" value="NOT_ANNOTATED_CDS"/>
    <property type="molecule type" value="Genomic_DNA"/>
</dbReference>
<dbReference type="EMBL" id="CP002684">
    <property type="protein sequence ID" value="AEE32228.1"/>
    <property type="molecule type" value="Genomic_DNA"/>
</dbReference>
<dbReference type="RefSeq" id="NP_683407.1">
    <property type="nucleotide sequence ID" value="NM_148566.2"/>
</dbReference>
<dbReference type="SMR" id="Q3E6X9"/>
<dbReference type="FunCoup" id="Q3E6X9">
    <property type="interactions" value="8"/>
</dbReference>
<dbReference type="STRING" id="3702.Q3E6X9"/>
<dbReference type="PaxDb" id="3702-AT1G47915.1"/>
<dbReference type="EnsemblPlants" id="AT1G47915.1">
    <property type="protein sequence ID" value="AT1G47915.1"/>
    <property type="gene ID" value="AT1G47915"/>
</dbReference>
<dbReference type="GeneID" id="841209"/>
<dbReference type="Gramene" id="AT1G47915.1">
    <property type="protein sequence ID" value="AT1G47915.1"/>
    <property type="gene ID" value="AT1G47915"/>
</dbReference>
<dbReference type="KEGG" id="ath:AT1G47915"/>
<dbReference type="Araport" id="AT1G47915"/>
<dbReference type="TAIR" id="AT1G47915"/>
<dbReference type="HOGENOM" id="CLU_202765_0_0_1"/>
<dbReference type="InParanoid" id="Q3E6X9"/>
<dbReference type="OMA" id="MFPEEIT"/>
<dbReference type="PhylomeDB" id="Q3E6X9"/>
<dbReference type="PRO" id="PR:Q3E6X9"/>
<dbReference type="Proteomes" id="UP000006548">
    <property type="component" value="Chromosome 1"/>
</dbReference>
<dbReference type="ExpressionAtlas" id="Q3E6X9">
    <property type="expression patterns" value="baseline and differential"/>
</dbReference>
<dbReference type="CDD" id="cd22160">
    <property type="entry name" value="F-box_AtFBL13-like"/>
    <property type="match status" value="1"/>
</dbReference>
<dbReference type="Gene3D" id="1.20.1280.50">
    <property type="match status" value="1"/>
</dbReference>
<dbReference type="InterPro" id="IPR036047">
    <property type="entry name" value="F-box-like_dom_sf"/>
</dbReference>
<dbReference type="InterPro" id="IPR053781">
    <property type="entry name" value="F-box_AtFBL13-like"/>
</dbReference>
<dbReference type="InterPro" id="IPR001810">
    <property type="entry name" value="F-box_dom"/>
</dbReference>
<dbReference type="InterPro" id="IPR055294">
    <property type="entry name" value="FBL60-like"/>
</dbReference>
<dbReference type="PANTHER" id="PTHR31293">
    <property type="entry name" value="RNI-LIKE SUPERFAMILY PROTEIN"/>
    <property type="match status" value="1"/>
</dbReference>
<dbReference type="PANTHER" id="PTHR31293:SF12">
    <property type="entry name" value="RNI-LIKE SUPERFAMILY PROTEIN"/>
    <property type="match status" value="1"/>
</dbReference>
<dbReference type="Pfam" id="PF00646">
    <property type="entry name" value="F-box"/>
    <property type="match status" value="1"/>
</dbReference>
<dbReference type="SMART" id="SM00256">
    <property type="entry name" value="FBOX"/>
    <property type="match status" value="1"/>
</dbReference>
<dbReference type="SUPFAM" id="SSF81383">
    <property type="entry name" value="F-box domain"/>
    <property type="match status" value="1"/>
</dbReference>
<dbReference type="PROSITE" id="PS50181">
    <property type="entry name" value="FBOX"/>
    <property type="match status" value="1"/>
</dbReference>
<feature type="chain" id="PRO_0000283321" description="Putative F-box protein At1g47915">
    <location>
        <begin position="1"/>
        <end position="73"/>
    </location>
</feature>
<feature type="domain" description="F-box" evidence="1">
    <location>
        <begin position="7"/>
        <end position="55"/>
    </location>
</feature>
<evidence type="ECO:0000255" key="1">
    <source>
        <dbReference type="PROSITE-ProRule" id="PRU00080"/>
    </source>
</evidence>
<sequence length="73" mass="8256">MMRTSPRDSISNLPDEILGKILSLLPTKVAASTSVLSKRWRNLLGLVDNLCFDESVVVYPNKEEAFKWFTSIL</sequence>
<protein>
    <recommendedName>
        <fullName>Putative F-box protein At1g47915</fullName>
    </recommendedName>
</protein>
<reference key="1">
    <citation type="journal article" date="2000" name="Nature">
        <title>Sequence and analysis of chromosome 1 of the plant Arabidopsis thaliana.</title>
        <authorList>
            <person name="Theologis A."/>
            <person name="Ecker J.R."/>
            <person name="Palm C.J."/>
            <person name="Federspiel N.A."/>
            <person name="Kaul S."/>
            <person name="White O."/>
            <person name="Alonso J."/>
            <person name="Altafi H."/>
            <person name="Araujo R."/>
            <person name="Bowman C.L."/>
            <person name="Brooks S.Y."/>
            <person name="Buehler E."/>
            <person name="Chan A."/>
            <person name="Chao Q."/>
            <person name="Chen H."/>
            <person name="Cheuk R.F."/>
            <person name="Chin C.W."/>
            <person name="Chung M.K."/>
            <person name="Conn L."/>
            <person name="Conway A.B."/>
            <person name="Conway A.R."/>
            <person name="Creasy T.H."/>
            <person name="Dewar K."/>
            <person name="Dunn P."/>
            <person name="Etgu P."/>
            <person name="Feldblyum T.V."/>
            <person name="Feng J.-D."/>
            <person name="Fong B."/>
            <person name="Fujii C.Y."/>
            <person name="Gill J.E."/>
            <person name="Goldsmith A.D."/>
            <person name="Haas B."/>
            <person name="Hansen N.F."/>
            <person name="Hughes B."/>
            <person name="Huizar L."/>
            <person name="Hunter J.L."/>
            <person name="Jenkins J."/>
            <person name="Johnson-Hopson C."/>
            <person name="Khan S."/>
            <person name="Khaykin E."/>
            <person name="Kim C.J."/>
            <person name="Koo H.L."/>
            <person name="Kremenetskaia I."/>
            <person name="Kurtz D.B."/>
            <person name="Kwan A."/>
            <person name="Lam B."/>
            <person name="Langin-Hooper S."/>
            <person name="Lee A."/>
            <person name="Lee J.M."/>
            <person name="Lenz C.A."/>
            <person name="Li J.H."/>
            <person name="Li Y.-P."/>
            <person name="Lin X."/>
            <person name="Liu S.X."/>
            <person name="Liu Z.A."/>
            <person name="Luros J.S."/>
            <person name="Maiti R."/>
            <person name="Marziali A."/>
            <person name="Militscher J."/>
            <person name="Miranda M."/>
            <person name="Nguyen M."/>
            <person name="Nierman W.C."/>
            <person name="Osborne B.I."/>
            <person name="Pai G."/>
            <person name="Peterson J."/>
            <person name="Pham P.K."/>
            <person name="Rizzo M."/>
            <person name="Rooney T."/>
            <person name="Rowley D."/>
            <person name="Sakano H."/>
            <person name="Salzberg S.L."/>
            <person name="Schwartz J.R."/>
            <person name="Shinn P."/>
            <person name="Southwick A.M."/>
            <person name="Sun H."/>
            <person name="Tallon L.J."/>
            <person name="Tambunga G."/>
            <person name="Toriumi M.J."/>
            <person name="Town C.D."/>
            <person name="Utterback T."/>
            <person name="Van Aken S."/>
            <person name="Vaysberg M."/>
            <person name="Vysotskaia V.S."/>
            <person name="Walker M."/>
            <person name="Wu D."/>
            <person name="Yu G."/>
            <person name="Fraser C.M."/>
            <person name="Venter J.C."/>
            <person name="Davis R.W."/>
        </authorList>
    </citation>
    <scope>NUCLEOTIDE SEQUENCE [LARGE SCALE GENOMIC DNA]</scope>
    <source>
        <strain>cv. Columbia</strain>
    </source>
</reference>
<reference key="2">
    <citation type="journal article" date="2017" name="Plant J.">
        <title>Araport11: a complete reannotation of the Arabidopsis thaliana reference genome.</title>
        <authorList>
            <person name="Cheng C.Y."/>
            <person name="Krishnakumar V."/>
            <person name="Chan A.P."/>
            <person name="Thibaud-Nissen F."/>
            <person name="Schobel S."/>
            <person name="Town C.D."/>
        </authorList>
    </citation>
    <scope>GENOME REANNOTATION</scope>
    <source>
        <strain>cv. Columbia</strain>
    </source>
</reference>
<organism>
    <name type="scientific">Arabidopsis thaliana</name>
    <name type="common">Mouse-ear cress</name>
    <dbReference type="NCBI Taxonomy" id="3702"/>
    <lineage>
        <taxon>Eukaryota</taxon>
        <taxon>Viridiplantae</taxon>
        <taxon>Streptophyta</taxon>
        <taxon>Embryophyta</taxon>
        <taxon>Tracheophyta</taxon>
        <taxon>Spermatophyta</taxon>
        <taxon>Magnoliopsida</taxon>
        <taxon>eudicotyledons</taxon>
        <taxon>Gunneridae</taxon>
        <taxon>Pentapetalae</taxon>
        <taxon>rosids</taxon>
        <taxon>malvids</taxon>
        <taxon>Brassicales</taxon>
        <taxon>Brassicaceae</taxon>
        <taxon>Camelineae</taxon>
        <taxon>Arabidopsis</taxon>
    </lineage>
</organism>